<dbReference type="EMBL" id="CM003141">
    <property type="protein sequence ID" value="KIS70974.1"/>
    <property type="molecule type" value="Genomic_DNA"/>
</dbReference>
<dbReference type="RefSeq" id="XP_011387346.1">
    <property type="nucleotide sequence ID" value="XM_011389044.1"/>
</dbReference>
<dbReference type="SMR" id="Q4PG71"/>
<dbReference type="FunCoup" id="Q4PG71">
    <property type="interactions" value="459"/>
</dbReference>
<dbReference type="STRING" id="237631.Q4PG71"/>
<dbReference type="EnsemblFungi" id="KIS70974">
    <property type="protein sequence ID" value="KIS70974"/>
    <property type="gene ID" value="UMAG_10611"/>
</dbReference>
<dbReference type="GeneID" id="23566614"/>
<dbReference type="KEGG" id="uma:UMAG_10611"/>
<dbReference type="VEuPathDB" id="FungiDB:UMAG_10611"/>
<dbReference type="eggNOG" id="KOG1783">
    <property type="taxonomic scope" value="Eukaryota"/>
</dbReference>
<dbReference type="InParanoid" id="Q4PG71"/>
<dbReference type="OrthoDB" id="268799at2759"/>
<dbReference type="Proteomes" id="UP000000561">
    <property type="component" value="Chromosome 2"/>
</dbReference>
<dbReference type="GO" id="GO:0005730">
    <property type="term" value="C:nucleolus"/>
    <property type="evidence" value="ECO:0000318"/>
    <property type="project" value="GO_Central"/>
</dbReference>
<dbReference type="GO" id="GO:0000932">
    <property type="term" value="C:P-body"/>
    <property type="evidence" value="ECO:0000318"/>
    <property type="project" value="GO_Central"/>
</dbReference>
<dbReference type="GO" id="GO:0005732">
    <property type="term" value="C:sno(s)RNA-containing ribonucleoprotein complex"/>
    <property type="evidence" value="ECO:0000318"/>
    <property type="project" value="GO_Central"/>
</dbReference>
<dbReference type="GO" id="GO:0005681">
    <property type="term" value="C:spliceosomal complex"/>
    <property type="evidence" value="ECO:0007669"/>
    <property type="project" value="UniProtKB-KW"/>
</dbReference>
<dbReference type="GO" id="GO:0046540">
    <property type="term" value="C:U4/U6 x U5 tri-snRNP complex"/>
    <property type="evidence" value="ECO:0000318"/>
    <property type="project" value="GO_Central"/>
</dbReference>
<dbReference type="GO" id="GO:0005688">
    <property type="term" value="C:U6 snRNP"/>
    <property type="evidence" value="ECO:0000318"/>
    <property type="project" value="GO_Central"/>
</dbReference>
<dbReference type="GO" id="GO:0003723">
    <property type="term" value="F:RNA binding"/>
    <property type="evidence" value="ECO:0000318"/>
    <property type="project" value="GO_Central"/>
</dbReference>
<dbReference type="GO" id="GO:0030490">
    <property type="term" value="P:maturation of SSU-rRNA"/>
    <property type="evidence" value="ECO:0000318"/>
    <property type="project" value="GO_Central"/>
</dbReference>
<dbReference type="GO" id="GO:0000398">
    <property type="term" value="P:mRNA splicing, via spliceosome"/>
    <property type="evidence" value="ECO:0000318"/>
    <property type="project" value="GO_Central"/>
</dbReference>
<dbReference type="GO" id="GO:0008033">
    <property type="term" value="P:tRNA processing"/>
    <property type="evidence" value="ECO:0007669"/>
    <property type="project" value="UniProtKB-KW"/>
</dbReference>
<dbReference type="CDD" id="cd01726">
    <property type="entry name" value="LSm6"/>
    <property type="match status" value="1"/>
</dbReference>
<dbReference type="FunFam" id="2.30.30.100:FF:000044">
    <property type="entry name" value="Probable U6 snRNA-associated Sm-like protein LSm6"/>
    <property type="match status" value="1"/>
</dbReference>
<dbReference type="Gene3D" id="2.30.30.100">
    <property type="match status" value="1"/>
</dbReference>
<dbReference type="InterPro" id="IPR016487">
    <property type="entry name" value="Lsm6/sSmF"/>
</dbReference>
<dbReference type="InterPro" id="IPR010920">
    <property type="entry name" value="LSM_dom_sf"/>
</dbReference>
<dbReference type="InterPro" id="IPR047575">
    <property type="entry name" value="Sm"/>
</dbReference>
<dbReference type="InterPro" id="IPR001163">
    <property type="entry name" value="Sm_dom_euk/arc"/>
</dbReference>
<dbReference type="PANTHER" id="PTHR11021">
    <property type="entry name" value="SMALL NUCLEAR RIBONUCLEOPROTEIN F SNRNP-F"/>
    <property type="match status" value="1"/>
</dbReference>
<dbReference type="PANTHER" id="PTHR11021:SF1">
    <property type="entry name" value="U6 SNRNA-ASSOCIATED SM-LIKE PROTEIN LSM6"/>
    <property type="match status" value="1"/>
</dbReference>
<dbReference type="Pfam" id="PF01423">
    <property type="entry name" value="LSM"/>
    <property type="match status" value="1"/>
</dbReference>
<dbReference type="PIRSF" id="PIRSF006609">
    <property type="entry name" value="snRNP_SmF"/>
    <property type="match status" value="1"/>
</dbReference>
<dbReference type="SMART" id="SM00651">
    <property type="entry name" value="Sm"/>
    <property type="match status" value="1"/>
</dbReference>
<dbReference type="SUPFAM" id="SSF50182">
    <property type="entry name" value="Sm-like ribonucleoproteins"/>
    <property type="match status" value="1"/>
</dbReference>
<dbReference type="PROSITE" id="PS52002">
    <property type="entry name" value="SM"/>
    <property type="match status" value="1"/>
</dbReference>
<sequence>MSAAAQQPNAKAGSPNDFLKGVIGKNVNVRLNSGIDYRGVLSCLDGYMNIALEQTVEYVDGIKKNSYGDAFIRGNNVMYITALEK</sequence>
<evidence type="ECO:0000250" key="1"/>
<evidence type="ECO:0000255" key="2">
    <source>
        <dbReference type="PROSITE-ProRule" id="PRU01346"/>
    </source>
</evidence>
<evidence type="ECO:0000305" key="3"/>
<gene>
    <name type="primary">LSM6</name>
    <name type="ORF">UMAG_10611</name>
</gene>
<reference key="1">
    <citation type="journal article" date="2006" name="Nature">
        <title>Insights from the genome of the biotrophic fungal plant pathogen Ustilago maydis.</title>
        <authorList>
            <person name="Kaemper J."/>
            <person name="Kahmann R."/>
            <person name="Boelker M."/>
            <person name="Ma L.-J."/>
            <person name="Brefort T."/>
            <person name="Saville B.J."/>
            <person name="Banuett F."/>
            <person name="Kronstad J.W."/>
            <person name="Gold S.E."/>
            <person name="Mueller O."/>
            <person name="Perlin M.H."/>
            <person name="Woesten H.A.B."/>
            <person name="de Vries R."/>
            <person name="Ruiz-Herrera J."/>
            <person name="Reynaga-Pena C.G."/>
            <person name="Snetselaar K."/>
            <person name="McCann M."/>
            <person name="Perez-Martin J."/>
            <person name="Feldbruegge M."/>
            <person name="Basse C.W."/>
            <person name="Steinberg G."/>
            <person name="Ibeas J.I."/>
            <person name="Holloman W."/>
            <person name="Guzman P."/>
            <person name="Farman M.L."/>
            <person name="Stajich J.E."/>
            <person name="Sentandreu R."/>
            <person name="Gonzalez-Prieto J.M."/>
            <person name="Kennell J.C."/>
            <person name="Molina L."/>
            <person name="Schirawski J."/>
            <person name="Mendoza-Mendoza A."/>
            <person name="Greilinger D."/>
            <person name="Muench K."/>
            <person name="Roessel N."/>
            <person name="Scherer M."/>
            <person name="Vranes M."/>
            <person name="Ladendorf O."/>
            <person name="Vincon V."/>
            <person name="Fuchs U."/>
            <person name="Sandrock B."/>
            <person name="Meng S."/>
            <person name="Ho E.C.H."/>
            <person name="Cahill M.J."/>
            <person name="Boyce K.J."/>
            <person name="Klose J."/>
            <person name="Klosterman S.J."/>
            <person name="Deelstra H.J."/>
            <person name="Ortiz-Castellanos L."/>
            <person name="Li W."/>
            <person name="Sanchez-Alonso P."/>
            <person name="Schreier P.H."/>
            <person name="Haeuser-Hahn I."/>
            <person name="Vaupel M."/>
            <person name="Koopmann E."/>
            <person name="Friedrich G."/>
            <person name="Voss H."/>
            <person name="Schlueter T."/>
            <person name="Margolis J."/>
            <person name="Platt D."/>
            <person name="Swimmer C."/>
            <person name="Gnirke A."/>
            <person name="Chen F."/>
            <person name="Vysotskaia V."/>
            <person name="Mannhaupt G."/>
            <person name="Gueldener U."/>
            <person name="Muensterkoetter M."/>
            <person name="Haase D."/>
            <person name="Oesterheld M."/>
            <person name="Mewes H.-W."/>
            <person name="Mauceli E.W."/>
            <person name="DeCaprio D."/>
            <person name="Wade C.M."/>
            <person name="Butler J."/>
            <person name="Young S.K."/>
            <person name="Jaffe D.B."/>
            <person name="Calvo S.E."/>
            <person name="Nusbaum C."/>
            <person name="Galagan J.E."/>
            <person name="Birren B.W."/>
        </authorList>
    </citation>
    <scope>NUCLEOTIDE SEQUENCE [LARGE SCALE GENOMIC DNA]</scope>
    <source>
        <strain>DSM 14603 / FGSC 9021 / UM521</strain>
    </source>
</reference>
<reference key="2">
    <citation type="submission" date="2014-09" db="EMBL/GenBank/DDBJ databases">
        <authorList>
            <person name="Gueldener U."/>
            <person name="Muensterkoetter M."/>
            <person name="Walter M.C."/>
            <person name="Mannhaupt G."/>
            <person name="Kahmann R."/>
        </authorList>
    </citation>
    <scope>GENOME REANNOTATION</scope>
    <source>
        <strain>DSM 14603 / FGSC 9021 / UM521</strain>
    </source>
</reference>
<protein>
    <recommendedName>
        <fullName>U6 snRNA-associated Sm-like protein LSm6</fullName>
    </recommendedName>
</protein>
<feature type="chain" id="PRO_0000333605" description="U6 snRNA-associated Sm-like protein LSm6">
    <location>
        <begin position="1"/>
        <end position="85"/>
    </location>
</feature>
<feature type="domain" description="Sm" evidence="2">
    <location>
        <begin position="14"/>
        <end position="85"/>
    </location>
</feature>
<organism>
    <name type="scientific">Mycosarcoma maydis</name>
    <name type="common">Corn smut fungus</name>
    <name type="synonym">Ustilago maydis</name>
    <dbReference type="NCBI Taxonomy" id="5270"/>
    <lineage>
        <taxon>Eukaryota</taxon>
        <taxon>Fungi</taxon>
        <taxon>Dikarya</taxon>
        <taxon>Basidiomycota</taxon>
        <taxon>Ustilaginomycotina</taxon>
        <taxon>Ustilaginomycetes</taxon>
        <taxon>Ustilaginales</taxon>
        <taxon>Ustilaginaceae</taxon>
        <taxon>Mycosarcoma</taxon>
    </lineage>
</organism>
<keyword id="KW-0963">Cytoplasm</keyword>
<keyword id="KW-0507">mRNA processing</keyword>
<keyword id="KW-0508">mRNA splicing</keyword>
<keyword id="KW-0539">Nucleus</keyword>
<keyword id="KW-1185">Reference proteome</keyword>
<keyword id="KW-0687">Ribonucleoprotein</keyword>
<keyword id="KW-0694">RNA-binding</keyword>
<keyword id="KW-0698">rRNA processing</keyword>
<keyword id="KW-0747">Spliceosome</keyword>
<keyword id="KW-0819">tRNA processing</keyword>
<proteinExistence type="inferred from homology"/>
<comment type="function">
    <text evidence="1">Component of LSm protein complexes, which are involved in RNA processing and may function in a chaperone-like manner, facilitating the efficient association of RNA processing factors with their substrates. Component of the cytoplasmic LSM1-LSM7 complex, which is thought to be involved in mRNA degradation by activating the decapping step in the 5'-to-3' mRNA decay pathway. Component of the nuclear LSM2-LSM8 complex, which is involved in splicing of nuclear mRNAs. LSM2-LSM8 associates with multiple snRNP complexes containing the U6 snRNA (U4/U6 di-snRNP, spliceosomal U4/U6.U5 tri-snRNP, and free U6 snRNP). It binds directly to the 3'-terminal U-tract of U6 snRNA and plays a role in the biogenesis and stability of the U6 snRNP and U4/U6 snRNP complexes. LSM2-LSM8 probably also is involved degradation of nuclear pre-mRNA by targeting them for decapping, and in processing of pre-tRNAs, pre-rRNAs and U3 snoRNA (By similarity).</text>
</comment>
<comment type="subunit">
    <text evidence="1">Component of the heptameric LSM1-LSM7 complex, which consists of LSM1, LSM2, LSM3, LSM4, LSM5, LSM6 and LSM7. Component of the heptameric LSM2-LSM8 complex, which consists of LSM2, LSM3, LSM4, LSM5, LSM6, LSM7 and LSM8. The LSm subunits form a seven-membered ring structure with a doughnut shape (By similarity).</text>
</comment>
<comment type="subcellular location">
    <subcellularLocation>
        <location evidence="1">Cytoplasm</location>
    </subcellularLocation>
    <subcellularLocation>
        <location evidence="1">Nucleus</location>
    </subcellularLocation>
</comment>
<comment type="similarity">
    <text evidence="3">Belongs to the snRNP Sm proteins family. SmF/LSm6 subfamily.</text>
</comment>
<accession>Q4PG71</accession>
<accession>A0A0D1E4J0</accession>
<name>LSM6_MYCMD</name>